<reference key="1">
    <citation type="journal article" date="2004" name="Genome Res.">
        <title>The status, quality, and expansion of the NIH full-length cDNA project: the Mammalian Gene Collection (MGC).</title>
        <authorList>
            <consortium name="The MGC Project Team"/>
        </authorList>
    </citation>
    <scope>NUCLEOTIDE SEQUENCE [LARGE SCALE MRNA]</scope>
    <source>
        <tissue>Testis</tissue>
    </source>
</reference>
<reference key="2">
    <citation type="journal article" date="2012" name="Nat. Commun.">
        <title>Quantitative maps of protein phosphorylation sites across 14 different rat organs and tissues.</title>
        <authorList>
            <person name="Lundby A."/>
            <person name="Secher A."/>
            <person name="Lage K."/>
            <person name="Nordsborg N.B."/>
            <person name="Dmytriyev A."/>
            <person name="Lundby C."/>
            <person name="Olsen J.V."/>
        </authorList>
    </citation>
    <scope>PHOSPHORYLATION [LARGE SCALE ANALYSIS] AT THR-178; SER-179 AND SER-303</scope>
    <scope>IDENTIFICATION BY MASS SPECTROMETRY [LARGE SCALE ANALYSIS]</scope>
</reference>
<name>LRC46_RAT</name>
<comment type="function">
    <text evidence="1">Required for normal spermatogenesis and male fertility. Plays an important role in sperm flagellum biogenesis.</text>
</comment>
<comment type="subcellular location">
    <subcellularLocation>
        <location evidence="1">Cell projection</location>
        <location evidence="1">Cilium</location>
        <location evidence="1">Flagellum</location>
    </subcellularLocation>
</comment>
<evidence type="ECO:0000250" key="1">
    <source>
        <dbReference type="UniProtKB" id="Q9DAP0"/>
    </source>
</evidence>
<evidence type="ECO:0000255" key="2"/>
<evidence type="ECO:0000256" key="3">
    <source>
        <dbReference type="SAM" id="MobiDB-lite"/>
    </source>
</evidence>
<evidence type="ECO:0007744" key="4">
    <source>
    </source>
</evidence>
<proteinExistence type="evidence at protein level"/>
<dbReference type="EMBL" id="BC079258">
    <property type="protein sequence ID" value="AAH79258.1"/>
    <property type="molecule type" value="mRNA"/>
</dbReference>
<dbReference type="RefSeq" id="NP_001004201.1">
    <property type="nucleotide sequence ID" value="NM_001004201.1"/>
</dbReference>
<dbReference type="SMR" id="Q6AXZ2"/>
<dbReference type="FunCoup" id="Q6AXZ2">
    <property type="interactions" value="76"/>
</dbReference>
<dbReference type="STRING" id="10116.ENSRNOP00000013542"/>
<dbReference type="iPTMnet" id="Q6AXZ2"/>
<dbReference type="PhosphoSitePlus" id="Q6AXZ2"/>
<dbReference type="PaxDb" id="10116-ENSRNOP00000013542"/>
<dbReference type="GeneID" id="287653"/>
<dbReference type="KEGG" id="rno:287653"/>
<dbReference type="UCSC" id="RGD:1303311">
    <property type="organism name" value="rat"/>
</dbReference>
<dbReference type="AGR" id="RGD:1303311"/>
<dbReference type="CTD" id="90506"/>
<dbReference type="RGD" id="1303311">
    <property type="gene designation" value="Lrrc46"/>
</dbReference>
<dbReference type="eggNOG" id="KOG0531">
    <property type="taxonomic scope" value="Eukaryota"/>
</dbReference>
<dbReference type="InParanoid" id="Q6AXZ2"/>
<dbReference type="OrthoDB" id="88775at9989"/>
<dbReference type="PhylomeDB" id="Q6AXZ2"/>
<dbReference type="PRO" id="PR:Q6AXZ2"/>
<dbReference type="Proteomes" id="UP000002494">
    <property type="component" value="Unplaced"/>
</dbReference>
<dbReference type="GO" id="GO:0031514">
    <property type="term" value="C:motile cilium"/>
    <property type="evidence" value="ECO:0007669"/>
    <property type="project" value="UniProtKB-SubCell"/>
</dbReference>
<dbReference type="GO" id="GO:0120316">
    <property type="term" value="P:sperm flagellum assembly"/>
    <property type="evidence" value="ECO:0000250"/>
    <property type="project" value="UniProtKB"/>
</dbReference>
<dbReference type="GO" id="GO:0007283">
    <property type="term" value="P:spermatogenesis"/>
    <property type="evidence" value="ECO:0000250"/>
    <property type="project" value="UniProtKB"/>
</dbReference>
<dbReference type="FunFam" id="3.80.10.10:FF:000932">
    <property type="entry name" value="Leucine Rich Repeat family protein"/>
    <property type="match status" value="1"/>
</dbReference>
<dbReference type="Gene3D" id="3.80.10.10">
    <property type="entry name" value="Ribonuclease Inhibitor"/>
    <property type="match status" value="1"/>
</dbReference>
<dbReference type="InterPro" id="IPR050576">
    <property type="entry name" value="Cilia_flagella_integrity"/>
</dbReference>
<dbReference type="InterPro" id="IPR001611">
    <property type="entry name" value="Leu-rich_rpt"/>
</dbReference>
<dbReference type="InterPro" id="IPR032675">
    <property type="entry name" value="LRR_dom_sf"/>
</dbReference>
<dbReference type="PANTHER" id="PTHR45973:SF9">
    <property type="entry name" value="LEUCINE-RICH REPEAT-CONTAINING PROTEIN 46"/>
    <property type="match status" value="1"/>
</dbReference>
<dbReference type="PANTHER" id="PTHR45973">
    <property type="entry name" value="PROTEIN PHOSPHATASE 1 REGULATORY SUBUNIT SDS22-RELATED"/>
    <property type="match status" value="1"/>
</dbReference>
<dbReference type="Pfam" id="PF14580">
    <property type="entry name" value="LRR_9"/>
    <property type="match status" value="1"/>
</dbReference>
<dbReference type="SMART" id="SM00365">
    <property type="entry name" value="LRR_SD22"/>
    <property type="match status" value="3"/>
</dbReference>
<dbReference type="SUPFAM" id="SSF52058">
    <property type="entry name" value="L domain-like"/>
    <property type="match status" value="1"/>
</dbReference>
<dbReference type="PROSITE" id="PS51450">
    <property type="entry name" value="LRR"/>
    <property type="match status" value="5"/>
</dbReference>
<feature type="chain" id="PRO_0000223922" description="Leucine-rich repeat-containing protein 46">
    <location>
        <begin position="1"/>
        <end position="323"/>
    </location>
</feature>
<feature type="repeat" description="LRR 1">
    <location>
        <begin position="49"/>
        <end position="70"/>
    </location>
</feature>
<feature type="repeat" description="LRR 2">
    <location>
        <begin position="71"/>
        <end position="92"/>
    </location>
</feature>
<feature type="repeat" description="LRR 3">
    <location>
        <begin position="93"/>
        <end position="114"/>
    </location>
</feature>
<feature type="repeat" description="LRR 4">
    <location>
        <begin position="115"/>
        <end position="135"/>
    </location>
</feature>
<feature type="domain" description="LRRCT">
    <location>
        <begin position="146"/>
        <end position="188"/>
    </location>
</feature>
<feature type="region of interest" description="Disordered" evidence="3">
    <location>
        <begin position="252"/>
        <end position="323"/>
    </location>
</feature>
<feature type="coiled-coil region" evidence="2">
    <location>
        <begin position="203"/>
        <end position="228"/>
    </location>
</feature>
<feature type="compositionally biased region" description="Polar residues" evidence="3">
    <location>
        <begin position="269"/>
        <end position="290"/>
    </location>
</feature>
<feature type="compositionally biased region" description="Low complexity" evidence="3">
    <location>
        <begin position="297"/>
        <end position="310"/>
    </location>
</feature>
<feature type="modified residue" description="Phosphothreonine" evidence="4">
    <location>
        <position position="178"/>
    </location>
</feature>
<feature type="modified residue" description="Phosphoserine" evidence="4">
    <location>
        <position position="179"/>
    </location>
</feature>
<feature type="modified residue" description="Phosphoserine" evidence="1">
    <location>
        <position position="185"/>
    </location>
</feature>
<feature type="modified residue" description="Phosphoserine" evidence="1">
    <location>
        <position position="186"/>
    </location>
</feature>
<feature type="modified residue" description="Phosphoserine" evidence="4">
    <location>
        <position position="303"/>
    </location>
</feature>
<keyword id="KW-0966">Cell projection</keyword>
<keyword id="KW-0969">Cilium</keyword>
<keyword id="KW-0175">Coiled coil</keyword>
<keyword id="KW-0221">Differentiation</keyword>
<keyword id="KW-0282">Flagellum</keyword>
<keyword id="KW-0433">Leucine-rich repeat</keyword>
<keyword id="KW-0597">Phosphoprotein</keyword>
<keyword id="KW-1185">Reference proteome</keyword>
<keyword id="KW-0677">Repeat</keyword>
<keyword id="KW-0744">Spermatogenesis</keyword>
<organism>
    <name type="scientific">Rattus norvegicus</name>
    <name type="common">Rat</name>
    <dbReference type="NCBI Taxonomy" id="10116"/>
    <lineage>
        <taxon>Eukaryota</taxon>
        <taxon>Metazoa</taxon>
        <taxon>Chordata</taxon>
        <taxon>Craniata</taxon>
        <taxon>Vertebrata</taxon>
        <taxon>Euteleostomi</taxon>
        <taxon>Mammalia</taxon>
        <taxon>Eutheria</taxon>
        <taxon>Euarchontoglires</taxon>
        <taxon>Glires</taxon>
        <taxon>Rodentia</taxon>
        <taxon>Myomorpha</taxon>
        <taxon>Muroidea</taxon>
        <taxon>Muridae</taxon>
        <taxon>Murinae</taxon>
        <taxon>Rattus</taxon>
    </lineage>
</organism>
<protein>
    <recommendedName>
        <fullName>Leucine-rich repeat-containing protein 46</fullName>
    </recommendedName>
</protein>
<gene>
    <name type="primary">Lrrc46</name>
</gene>
<sequence length="323" mass="36003">MPGDKQEAKNATQKTEEGVHITEALITKRNLTFPEDEDLSEKMFHTLDDLETVRLDGEGITCIGNLERLRNIHSLYLQSNKIQRIENLACITSLRFLSLAGNQIRHVENLLDLQYLQFLDLSENLIETLKLDELPQSLLILNLCGNPCTNQDGYRKMVIGALPLLLDLDKQPILERWTSDEEDKSSDEEEEFPELNGPFCAERGFFKDLEQELHQHQERRQQAALTEHLSRMETQPVLTDLPLLPAVPMAGDCSPAVTEEPGKEAAPKATSSTQMASSSKKQVPRNQKGSVQARKGALAATASKTSLAAAPSMTKSTNKRGTK</sequence>
<accession>Q6AXZ2</accession>